<protein>
    <recommendedName>
        <fullName evidence="1">6,7-dimethyl-8-ribityllumazine synthase</fullName>
        <shortName evidence="1">DMRL synthase</shortName>
        <shortName evidence="1">LS</shortName>
        <shortName evidence="1">Lumazine synthase</shortName>
        <ecNumber evidence="1">2.5.1.78</ecNumber>
    </recommendedName>
</protein>
<evidence type="ECO:0000255" key="1">
    <source>
        <dbReference type="HAMAP-Rule" id="MF_00178"/>
    </source>
</evidence>
<dbReference type="EC" id="2.5.1.78" evidence="1"/>
<dbReference type="EMBL" id="BX936398">
    <property type="protein sequence ID" value="CAH20175.1"/>
    <property type="molecule type" value="Genomic_DNA"/>
</dbReference>
<dbReference type="SMR" id="Q66DV8"/>
<dbReference type="KEGG" id="ypo:BZ17_1611"/>
<dbReference type="KEGG" id="yps:YPTB0935"/>
<dbReference type="PATRIC" id="fig|273123.14.peg.1709"/>
<dbReference type="UniPathway" id="UPA00275">
    <property type="reaction ID" value="UER00404"/>
</dbReference>
<dbReference type="Proteomes" id="UP000001011">
    <property type="component" value="Chromosome"/>
</dbReference>
<dbReference type="GO" id="GO:0005829">
    <property type="term" value="C:cytosol"/>
    <property type="evidence" value="ECO:0007669"/>
    <property type="project" value="TreeGrafter"/>
</dbReference>
<dbReference type="GO" id="GO:0009349">
    <property type="term" value="C:riboflavin synthase complex"/>
    <property type="evidence" value="ECO:0007669"/>
    <property type="project" value="InterPro"/>
</dbReference>
<dbReference type="GO" id="GO:0000906">
    <property type="term" value="F:6,7-dimethyl-8-ribityllumazine synthase activity"/>
    <property type="evidence" value="ECO:0007669"/>
    <property type="project" value="UniProtKB-UniRule"/>
</dbReference>
<dbReference type="GO" id="GO:0009231">
    <property type="term" value="P:riboflavin biosynthetic process"/>
    <property type="evidence" value="ECO:0007669"/>
    <property type="project" value="UniProtKB-UniRule"/>
</dbReference>
<dbReference type="CDD" id="cd09209">
    <property type="entry name" value="Lumazine_synthase-I"/>
    <property type="match status" value="1"/>
</dbReference>
<dbReference type="FunFam" id="3.40.50.960:FF:000001">
    <property type="entry name" value="6,7-dimethyl-8-ribityllumazine synthase"/>
    <property type="match status" value="1"/>
</dbReference>
<dbReference type="Gene3D" id="3.40.50.960">
    <property type="entry name" value="Lumazine/riboflavin synthase"/>
    <property type="match status" value="1"/>
</dbReference>
<dbReference type="HAMAP" id="MF_00178">
    <property type="entry name" value="Lumazine_synth"/>
    <property type="match status" value="1"/>
</dbReference>
<dbReference type="InterPro" id="IPR034964">
    <property type="entry name" value="LS"/>
</dbReference>
<dbReference type="InterPro" id="IPR002180">
    <property type="entry name" value="LS/RS"/>
</dbReference>
<dbReference type="InterPro" id="IPR036467">
    <property type="entry name" value="LS/RS_sf"/>
</dbReference>
<dbReference type="NCBIfam" id="TIGR00114">
    <property type="entry name" value="lumazine-synth"/>
    <property type="match status" value="1"/>
</dbReference>
<dbReference type="NCBIfam" id="NF000812">
    <property type="entry name" value="PRK00061.1-4"/>
    <property type="match status" value="1"/>
</dbReference>
<dbReference type="PANTHER" id="PTHR21058:SF0">
    <property type="entry name" value="6,7-DIMETHYL-8-RIBITYLLUMAZINE SYNTHASE"/>
    <property type="match status" value="1"/>
</dbReference>
<dbReference type="PANTHER" id="PTHR21058">
    <property type="entry name" value="6,7-DIMETHYL-8-RIBITYLLUMAZINE SYNTHASE DMRL SYNTHASE LUMAZINE SYNTHASE"/>
    <property type="match status" value="1"/>
</dbReference>
<dbReference type="Pfam" id="PF00885">
    <property type="entry name" value="DMRL_synthase"/>
    <property type="match status" value="1"/>
</dbReference>
<dbReference type="SUPFAM" id="SSF52121">
    <property type="entry name" value="Lumazine synthase"/>
    <property type="match status" value="1"/>
</dbReference>
<feature type="chain" id="PRO_1000040555" description="6,7-dimethyl-8-ribityllumazine synthase">
    <location>
        <begin position="1"/>
        <end position="156"/>
    </location>
</feature>
<feature type="active site" description="Proton donor" evidence="1">
    <location>
        <position position="89"/>
    </location>
</feature>
<feature type="binding site" evidence="1">
    <location>
        <position position="22"/>
    </location>
    <ligand>
        <name>5-amino-6-(D-ribitylamino)uracil</name>
        <dbReference type="ChEBI" id="CHEBI:15934"/>
    </ligand>
</feature>
<feature type="binding site" evidence="1">
    <location>
        <begin position="57"/>
        <end position="59"/>
    </location>
    <ligand>
        <name>5-amino-6-(D-ribitylamino)uracil</name>
        <dbReference type="ChEBI" id="CHEBI:15934"/>
    </ligand>
</feature>
<feature type="binding site" evidence="1">
    <location>
        <begin position="81"/>
        <end position="83"/>
    </location>
    <ligand>
        <name>5-amino-6-(D-ribitylamino)uracil</name>
        <dbReference type="ChEBI" id="CHEBI:15934"/>
    </ligand>
</feature>
<feature type="binding site" evidence="1">
    <location>
        <begin position="86"/>
        <end position="87"/>
    </location>
    <ligand>
        <name>(2S)-2-hydroxy-3-oxobutyl phosphate</name>
        <dbReference type="ChEBI" id="CHEBI:58830"/>
    </ligand>
</feature>
<feature type="binding site" evidence="1">
    <location>
        <position position="114"/>
    </location>
    <ligand>
        <name>5-amino-6-(D-ribitylamino)uracil</name>
        <dbReference type="ChEBI" id="CHEBI:15934"/>
    </ligand>
</feature>
<feature type="binding site" evidence="1">
    <location>
        <position position="128"/>
    </location>
    <ligand>
        <name>(2S)-2-hydroxy-3-oxobutyl phosphate</name>
        <dbReference type="ChEBI" id="CHEBI:58830"/>
    </ligand>
</feature>
<organism>
    <name type="scientific">Yersinia pseudotuberculosis serotype I (strain IP32953)</name>
    <dbReference type="NCBI Taxonomy" id="273123"/>
    <lineage>
        <taxon>Bacteria</taxon>
        <taxon>Pseudomonadati</taxon>
        <taxon>Pseudomonadota</taxon>
        <taxon>Gammaproteobacteria</taxon>
        <taxon>Enterobacterales</taxon>
        <taxon>Yersiniaceae</taxon>
        <taxon>Yersinia</taxon>
    </lineage>
</organism>
<name>RISB_YERPS</name>
<comment type="function">
    <text evidence="1">Catalyzes the formation of 6,7-dimethyl-8-ribityllumazine by condensation of 5-amino-6-(D-ribitylamino)uracil with 3,4-dihydroxy-2-butanone 4-phosphate. This is the penultimate step in the biosynthesis of riboflavin.</text>
</comment>
<comment type="catalytic activity">
    <reaction evidence="1">
        <text>(2S)-2-hydroxy-3-oxobutyl phosphate + 5-amino-6-(D-ribitylamino)uracil = 6,7-dimethyl-8-(1-D-ribityl)lumazine + phosphate + 2 H2O + H(+)</text>
        <dbReference type="Rhea" id="RHEA:26152"/>
        <dbReference type="ChEBI" id="CHEBI:15377"/>
        <dbReference type="ChEBI" id="CHEBI:15378"/>
        <dbReference type="ChEBI" id="CHEBI:15934"/>
        <dbReference type="ChEBI" id="CHEBI:43474"/>
        <dbReference type="ChEBI" id="CHEBI:58201"/>
        <dbReference type="ChEBI" id="CHEBI:58830"/>
        <dbReference type="EC" id="2.5.1.78"/>
    </reaction>
</comment>
<comment type="pathway">
    <text evidence="1">Cofactor biosynthesis; riboflavin biosynthesis; riboflavin from 2-hydroxy-3-oxobutyl phosphate and 5-amino-6-(D-ribitylamino)uracil: step 1/2.</text>
</comment>
<comment type="subunit">
    <text evidence="1">Forms an icosahedral capsid composed of 60 subunits, arranged as a dodecamer of pentamers.</text>
</comment>
<comment type="similarity">
    <text evidence="1">Belongs to the DMRL synthase family.</text>
</comment>
<sequence length="156" mass="16197">MNVIEGVVATPNARVAIAIARFNNFINDSLLDGAIDALKRIGQVSDDNITVVWVPGAYELPLVANVLAKTNRYDAVIALGTVIRGGTAHFEYVAGEASSGLSSVAMNSDIPVAFGVLTTESIEQAIERAGTKAGNKGAEAALTALEMINVIKAIKG</sequence>
<keyword id="KW-0686">Riboflavin biosynthesis</keyword>
<keyword id="KW-0808">Transferase</keyword>
<reference key="1">
    <citation type="journal article" date="2004" name="Proc. Natl. Acad. Sci. U.S.A.">
        <title>Insights into the evolution of Yersinia pestis through whole-genome comparison with Yersinia pseudotuberculosis.</title>
        <authorList>
            <person name="Chain P.S.G."/>
            <person name="Carniel E."/>
            <person name="Larimer F.W."/>
            <person name="Lamerdin J."/>
            <person name="Stoutland P.O."/>
            <person name="Regala W.M."/>
            <person name="Georgescu A.M."/>
            <person name="Vergez L.M."/>
            <person name="Land M.L."/>
            <person name="Motin V.L."/>
            <person name="Brubaker R.R."/>
            <person name="Fowler J."/>
            <person name="Hinnebusch J."/>
            <person name="Marceau M."/>
            <person name="Medigue C."/>
            <person name="Simonet M."/>
            <person name="Chenal-Francisque V."/>
            <person name="Souza B."/>
            <person name="Dacheux D."/>
            <person name="Elliott J.M."/>
            <person name="Derbise A."/>
            <person name="Hauser L.J."/>
            <person name="Garcia E."/>
        </authorList>
    </citation>
    <scope>NUCLEOTIDE SEQUENCE [LARGE SCALE GENOMIC DNA]</scope>
    <source>
        <strain>IP32953</strain>
    </source>
</reference>
<gene>
    <name evidence="1" type="primary">ribH</name>
    <name type="ordered locus">YPTB0935</name>
</gene>
<accession>Q66DV8</accession>
<proteinExistence type="inferred from homology"/>